<comment type="catalytic activity">
    <reaction evidence="1">
        <text>(6S)-5,6,7,8-tetrahydrofolate + formate + ATP = (6R)-10-formyltetrahydrofolate + ADP + phosphate</text>
        <dbReference type="Rhea" id="RHEA:20221"/>
        <dbReference type="ChEBI" id="CHEBI:15740"/>
        <dbReference type="ChEBI" id="CHEBI:30616"/>
        <dbReference type="ChEBI" id="CHEBI:43474"/>
        <dbReference type="ChEBI" id="CHEBI:57453"/>
        <dbReference type="ChEBI" id="CHEBI:195366"/>
        <dbReference type="ChEBI" id="CHEBI:456216"/>
        <dbReference type="EC" id="6.3.4.3"/>
    </reaction>
</comment>
<comment type="pathway">
    <text evidence="1">One-carbon metabolism; tetrahydrofolate interconversion.</text>
</comment>
<comment type="similarity">
    <text evidence="1">Belongs to the formate--tetrahydrofolate ligase family.</text>
</comment>
<protein>
    <recommendedName>
        <fullName evidence="1">Formate--tetrahydrofolate ligase</fullName>
        <ecNumber evidence="1">6.3.4.3</ecNumber>
    </recommendedName>
    <alternativeName>
        <fullName evidence="1">Formyltetrahydrofolate synthetase</fullName>
        <shortName evidence="1">FHS</shortName>
        <shortName evidence="1">FTHFS</shortName>
    </alternativeName>
</protein>
<proteinExistence type="inferred from homology"/>
<name>FTHS_STAA1</name>
<gene>
    <name evidence="1" type="primary">fhs</name>
    <name type="ordered locus">SAHV_1718</name>
</gene>
<evidence type="ECO:0000255" key="1">
    <source>
        <dbReference type="HAMAP-Rule" id="MF_01543"/>
    </source>
</evidence>
<sequence length="555" mass="59872">MTHLSDLDIANQSTLQPIKDIAASVGISEDALEPYGHYKAKIDINKITPRENKGKVVLVTAMSPTPAGEGKSTVTVGLADAFHELNKNVMVALREPALGPTFGIKGGATGGGYAQVLPMEDINLHFNGDFHAITTANNALSAFIDNHIHQGNELGIDQRRIEWKRVLDMNDRALRHVNVGLGGPTNGVPREDGFNITVASEIMAILCLSRSIKDLKDKISRITIGYTRDRKPVTVADLKVQGALAMILKDAIKPNLVQSIEGTPALVHGGPFANIAHGCNSILATETARDLADIVVTEAGFGSDLGAEKFMDIKAREAGFDLAAVVVVATIRALKMHGGVAKDNLKEENVEAVKAGIVNLERHVNNIKKFGVEPVVAINAFIHDTDAEVEYVKSWAKENNVRIALTEVWEKGGKGGVDLANEVLEVIDQPNSFKPLYELELPLEQKIEKIVTEIYGGSKVTFSSKAQKQLKQFKENGWDNYPVCMAKTQYSFSDDQTLLGAPSGFEITIRELEAKTGAGFIVALTGAIMTMPGLPKKPAALNMDVTDDGHAIGLF</sequence>
<keyword id="KW-0067">ATP-binding</keyword>
<keyword id="KW-0436">Ligase</keyword>
<keyword id="KW-0547">Nucleotide-binding</keyword>
<keyword id="KW-0554">One-carbon metabolism</keyword>
<accession>A7X3G5</accession>
<dbReference type="EC" id="6.3.4.3" evidence="1"/>
<dbReference type="EMBL" id="AP009324">
    <property type="protein sequence ID" value="BAF78601.1"/>
    <property type="molecule type" value="Genomic_DNA"/>
</dbReference>
<dbReference type="RefSeq" id="WP_000149407.1">
    <property type="nucleotide sequence ID" value="NC_009782.1"/>
</dbReference>
<dbReference type="SMR" id="A7X3G5"/>
<dbReference type="KEGG" id="saw:SAHV_1718"/>
<dbReference type="HOGENOM" id="CLU_003601_3_3_9"/>
<dbReference type="UniPathway" id="UPA00193"/>
<dbReference type="GO" id="GO:0005524">
    <property type="term" value="F:ATP binding"/>
    <property type="evidence" value="ECO:0007669"/>
    <property type="project" value="UniProtKB-UniRule"/>
</dbReference>
<dbReference type="GO" id="GO:0004329">
    <property type="term" value="F:formate-tetrahydrofolate ligase activity"/>
    <property type="evidence" value="ECO:0007669"/>
    <property type="project" value="UniProtKB-UniRule"/>
</dbReference>
<dbReference type="GO" id="GO:0035999">
    <property type="term" value="P:tetrahydrofolate interconversion"/>
    <property type="evidence" value="ECO:0007669"/>
    <property type="project" value="UniProtKB-UniRule"/>
</dbReference>
<dbReference type="CDD" id="cd00477">
    <property type="entry name" value="FTHFS"/>
    <property type="match status" value="1"/>
</dbReference>
<dbReference type="FunFam" id="3.30.1510.10:FF:000001">
    <property type="entry name" value="Formate--tetrahydrofolate ligase"/>
    <property type="match status" value="1"/>
</dbReference>
<dbReference type="FunFam" id="3.10.410.10:FF:000001">
    <property type="entry name" value="Putative formate--tetrahydrofolate ligase"/>
    <property type="match status" value="1"/>
</dbReference>
<dbReference type="Gene3D" id="3.30.1510.10">
    <property type="entry name" value="Domain 2, N(10)-formyltetrahydrofolate synthetase"/>
    <property type="match status" value="1"/>
</dbReference>
<dbReference type="Gene3D" id="3.10.410.10">
    <property type="entry name" value="Formyltetrahydrofolate synthetase, domain 3"/>
    <property type="match status" value="1"/>
</dbReference>
<dbReference type="Gene3D" id="3.40.50.300">
    <property type="entry name" value="P-loop containing nucleotide triphosphate hydrolases"/>
    <property type="match status" value="1"/>
</dbReference>
<dbReference type="HAMAP" id="MF_01543">
    <property type="entry name" value="FTHFS"/>
    <property type="match status" value="1"/>
</dbReference>
<dbReference type="InterPro" id="IPR000559">
    <property type="entry name" value="Formate_THF_ligase"/>
</dbReference>
<dbReference type="InterPro" id="IPR020628">
    <property type="entry name" value="Formate_THF_ligase_CS"/>
</dbReference>
<dbReference type="InterPro" id="IPR027417">
    <property type="entry name" value="P-loop_NTPase"/>
</dbReference>
<dbReference type="NCBIfam" id="NF010030">
    <property type="entry name" value="PRK13505.1"/>
    <property type="match status" value="1"/>
</dbReference>
<dbReference type="Pfam" id="PF01268">
    <property type="entry name" value="FTHFS"/>
    <property type="match status" value="1"/>
</dbReference>
<dbReference type="SUPFAM" id="SSF52540">
    <property type="entry name" value="P-loop containing nucleoside triphosphate hydrolases"/>
    <property type="match status" value="1"/>
</dbReference>
<dbReference type="PROSITE" id="PS00721">
    <property type="entry name" value="FTHFS_1"/>
    <property type="match status" value="1"/>
</dbReference>
<dbReference type="PROSITE" id="PS00722">
    <property type="entry name" value="FTHFS_2"/>
    <property type="match status" value="1"/>
</dbReference>
<reference key="1">
    <citation type="journal article" date="2008" name="Antimicrob. Agents Chemother.">
        <title>Mutated response regulator graR is responsible for phenotypic conversion of Staphylococcus aureus from heterogeneous vancomycin-intermediate resistance to vancomycin-intermediate resistance.</title>
        <authorList>
            <person name="Neoh H.-M."/>
            <person name="Cui L."/>
            <person name="Yuzawa H."/>
            <person name="Takeuchi F."/>
            <person name="Matsuo M."/>
            <person name="Hiramatsu K."/>
        </authorList>
    </citation>
    <scope>NUCLEOTIDE SEQUENCE [LARGE SCALE GENOMIC DNA]</scope>
    <source>
        <strain>Mu3 / ATCC 700698</strain>
    </source>
</reference>
<feature type="chain" id="PRO_1000068796" description="Formate--tetrahydrofolate ligase">
    <location>
        <begin position="1"/>
        <end position="555"/>
    </location>
</feature>
<feature type="binding site" evidence="1">
    <location>
        <begin position="65"/>
        <end position="72"/>
    </location>
    <ligand>
        <name>ATP</name>
        <dbReference type="ChEBI" id="CHEBI:30616"/>
    </ligand>
</feature>
<organism>
    <name type="scientific">Staphylococcus aureus (strain Mu3 / ATCC 700698)</name>
    <dbReference type="NCBI Taxonomy" id="418127"/>
    <lineage>
        <taxon>Bacteria</taxon>
        <taxon>Bacillati</taxon>
        <taxon>Bacillota</taxon>
        <taxon>Bacilli</taxon>
        <taxon>Bacillales</taxon>
        <taxon>Staphylococcaceae</taxon>
        <taxon>Staphylococcus</taxon>
    </lineage>
</organism>